<proteinExistence type="predicted"/>
<dbReference type="EMBL" id="AF440571">
    <property type="protein sequence ID" value="AAL27770.1"/>
    <property type="molecule type" value="Genomic_DNA"/>
</dbReference>
<dbReference type="RefSeq" id="NP_445724.1">
    <property type="nucleotide sequence ID" value="NC_003214.2"/>
</dbReference>
<dbReference type="GeneID" id="922323"/>
<dbReference type="KEGG" id="vg:922323"/>
<dbReference type="Proteomes" id="UP000007017">
    <property type="component" value="Segment"/>
</dbReference>
<keyword id="KW-1185">Reference proteome</keyword>
<accession>Q914H1</accession>
<reference key="1">
    <citation type="journal article" date="2000" name="Virology">
        <title>A novel lipothrixvirus, SIFV, of the extremely thermophilic crenarchaeon Sulfolobus.</title>
        <authorList>
            <person name="Arnold H.P."/>
            <person name="Zillig W."/>
            <person name="Ziese U."/>
            <person name="Holz I."/>
            <person name="Crosby M."/>
            <person name="Utterback T."/>
            <person name="Weidmann J.F."/>
            <person name="Umayam L.A."/>
            <person name="Teffera K."/>
            <person name="Kristjanson J.K."/>
            <person name="Klenk H.P."/>
            <person name="Nelson K.E."/>
            <person name="Fraser C.M."/>
        </authorList>
    </citation>
    <scope>NUCLEOTIDE SEQUENCE [GENOMIC DNA]</scope>
</reference>
<name>Y061_SIFVH</name>
<feature type="chain" id="PRO_0000385397" description="Uncharacterized protein 61">
    <location>
        <begin position="1"/>
        <end position="183"/>
    </location>
</feature>
<organismHost>
    <name type="scientific">Saccharolobus islandicus</name>
    <name type="common">Sulfolobus islandicus</name>
    <dbReference type="NCBI Taxonomy" id="43080"/>
</organismHost>
<sequence length="183" mass="19889">MINIERVLYIVYSSLLNNIPTYGAIANINGSPINLQAKYSNSTLTLQGDIIIQATTNTLTIEIYIGNYPIDSISLNVALSPGTYTLVYTLTINDSTGIINNAFGYAVTNQLKSVSISTNSTLYTISYTQNMLTFYLEYTSYPTTVSITVTFTLTNGSTVTGSYSNSIQGTTLYGIVIPVTFEV</sequence>
<gene>
    <name type="primary">SIFV0061</name>
</gene>
<protein>
    <recommendedName>
        <fullName>Uncharacterized protein 61</fullName>
    </recommendedName>
</protein>
<organism>
    <name type="scientific">Sulfolobus islandicus filamentous virus (isolate Iceland/Hveragerdi)</name>
    <name type="common">SIFV</name>
    <dbReference type="NCBI Taxonomy" id="654908"/>
    <lineage>
        <taxon>Viruses</taxon>
        <taxon>Adnaviria</taxon>
        <taxon>Zilligvirae</taxon>
        <taxon>Taleaviricota</taxon>
        <taxon>Tokiviricetes</taxon>
        <taxon>Ligamenvirales</taxon>
        <taxon>Lipothrixviridae</taxon>
        <taxon>Betalipothrixvirus</taxon>
        <taxon>Sulfolobus islandicus filamentous virus</taxon>
    </lineage>
</organism>